<feature type="chain" id="PRO_0000436783" description="Proton-coupled amino acid transporter-like protein acs">
    <location>
        <begin position="1"/>
        <end position="451"/>
    </location>
</feature>
<feature type="topological domain" description="Cytoplasmic" evidence="7">
    <location>
        <begin position="1"/>
        <end position="48"/>
    </location>
</feature>
<feature type="transmembrane region" description="Helical" evidence="1">
    <location>
        <begin position="49"/>
        <end position="69"/>
    </location>
</feature>
<feature type="topological domain" description="Extracellular" evidence="7">
    <location>
        <begin position="70"/>
        <end position="80"/>
    </location>
</feature>
<feature type="transmembrane region" description="Helical" evidence="1">
    <location>
        <begin position="81"/>
        <end position="101"/>
    </location>
</feature>
<feature type="topological domain" description="Cytoplasmic" evidence="7">
    <location>
        <begin position="102"/>
        <end position="136"/>
    </location>
</feature>
<feature type="transmembrane region" description="Helical" evidence="1">
    <location>
        <begin position="137"/>
        <end position="157"/>
    </location>
</feature>
<feature type="topological domain" description="Extracellular" evidence="7">
    <location>
        <begin position="158"/>
        <end position="167"/>
    </location>
</feature>
<feature type="transmembrane region" description="Helical" evidence="1">
    <location>
        <begin position="168"/>
        <end position="188"/>
    </location>
</feature>
<feature type="topological domain" description="Cytoplasmic" evidence="7">
    <location>
        <begin position="189"/>
        <end position="199"/>
    </location>
</feature>
<feature type="transmembrane region" description="Helical" evidence="1">
    <location>
        <begin position="200"/>
        <end position="220"/>
    </location>
</feature>
<feature type="topological domain" description="Extracellular" evidence="7">
    <location>
        <begin position="221"/>
        <end position="237"/>
    </location>
</feature>
<feature type="transmembrane region" description="Helical" evidence="1">
    <location>
        <begin position="238"/>
        <end position="258"/>
    </location>
</feature>
<feature type="topological domain" description="Cytoplasmic" evidence="7">
    <location>
        <begin position="259"/>
        <end position="272"/>
    </location>
</feature>
<feature type="transmembrane region" description="Helical" evidence="1">
    <location>
        <begin position="273"/>
        <end position="293"/>
    </location>
</feature>
<feature type="topological domain" description="Extracellular" evidence="7">
    <location>
        <begin position="294"/>
        <end position="320"/>
    </location>
</feature>
<feature type="transmembrane region" description="Helical" evidence="1">
    <location>
        <begin position="321"/>
        <end position="341"/>
    </location>
</feature>
<feature type="topological domain" description="Cytoplasmic" evidence="7">
    <location>
        <begin position="342"/>
        <end position="357"/>
    </location>
</feature>
<feature type="transmembrane region" description="Helical" evidence="1">
    <location>
        <begin position="358"/>
        <end position="378"/>
    </location>
</feature>
<feature type="topological domain" description="Extracellular" evidence="7">
    <location>
        <begin position="379"/>
        <end position="382"/>
    </location>
</feature>
<feature type="transmembrane region" description="Helical" evidence="1">
    <location>
        <begin position="383"/>
        <end position="403"/>
    </location>
</feature>
<feature type="topological domain" description="Cytoplasmic" evidence="7">
    <location>
        <begin position="404"/>
        <end position="420"/>
    </location>
</feature>
<feature type="transmembrane region" description="Helical" evidence="1">
    <location>
        <begin position="421"/>
        <end position="441"/>
    </location>
</feature>
<feature type="topological domain" description="Extracellular" evidence="7">
    <location>
        <begin position="442"/>
        <end position="451"/>
    </location>
</feature>
<feature type="glycosylation site" description="N-linked (GlcNAc...) asparagine" evidence="2">
    <location>
        <position position="75"/>
    </location>
</feature>
<feature type="glycosylation site" description="N-linked (GlcNAc...) asparagine" evidence="2">
    <location>
        <position position="299"/>
    </location>
</feature>
<protein>
    <recommendedName>
        <fullName evidence="7">Proton-coupled amino acid transporter-like protein acs</fullName>
    </recommendedName>
    <alternativeName>
        <fullName evidence="6 9">Protein arcus</fullName>
    </alternativeName>
</protein>
<organism evidence="10">
    <name type="scientific">Drosophila melanogaster</name>
    <name type="common">Fruit fly</name>
    <dbReference type="NCBI Taxonomy" id="7227"/>
    <lineage>
        <taxon>Eukaryota</taxon>
        <taxon>Metazoa</taxon>
        <taxon>Ecdysozoa</taxon>
        <taxon>Arthropoda</taxon>
        <taxon>Hexapoda</taxon>
        <taxon>Insecta</taxon>
        <taxon>Pterygota</taxon>
        <taxon>Neoptera</taxon>
        <taxon>Endopterygota</taxon>
        <taxon>Diptera</taxon>
        <taxon>Brachycera</taxon>
        <taxon>Muscomorpha</taxon>
        <taxon>Ephydroidea</taxon>
        <taxon>Drosophilidae</taxon>
        <taxon>Drosophila</taxon>
        <taxon>Sophophora</taxon>
    </lineage>
</organism>
<keyword id="KW-0029">Amino-acid transport</keyword>
<keyword id="KW-1003">Cell membrane</keyword>
<keyword id="KW-0967">Endosome</keyword>
<keyword id="KW-0325">Glycoprotein</keyword>
<keyword id="KW-0341">Growth regulation</keyword>
<keyword id="KW-0458">Lysosome</keyword>
<keyword id="KW-0472">Membrane</keyword>
<keyword id="KW-1185">Reference proteome</keyword>
<keyword id="KW-0812">Transmembrane</keyword>
<keyword id="KW-1133">Transmembrane helix</keyword>
<keyword id="KW-0813">Transport</keyword>
<accession>Q9W056</accession>
<evidence type="ECO:0000255" key="1"/>
<evidence type="ECO:0000255" key="2">
    <source>
        <dbReference type="PROSITE-ProRule" id="PRU00498"/>
    </source>
</evidence>
<evidence type="ECO:0000269" key="3">
    <source>
    </source>
</evidence>
<evidence type="ECO:0000269" key="4">
    <source>
    </source>
</evidence>
<evidence type="ECO:0000269" key="5">
    <source>
    </source>
</evidence>
<evidence type="ECO:0000303" key="6">
    <source>
    </source>
</evidence>
<evidence type="ECO:0000305" key="7"/>
<evidence type="ECO:0000312" key="8">
    <source>
        <dbReference type="EMBL" id="AAM50914.1"/>
    </source>
</evidence>
<evidence type="ECO:0000312" key="9">
    <source>
        <dbReference type="FlyBase" id="FBgn0035300"/>
    </source>
</evidence>
<evidence type="ECO:0000312" key="10">
    <source>
        <dbReference type="Proteomes" id="UP000000803"/>
    </source>
</evidence>
<reference evidence="10" key="1">
    <citation type="journal article" date="2000" name="Science">
        <title>The genome sequence of Drosophila melanogaster.</title>
        <authorList>
            <person name="Adams M.D."/>
            <person name="Celniker S.E."/>
            <person name="Holt R.A."/>
            <person name="Evans C.A."/>
            <person name="Gocayne J.D."/>
            <person name="Amanatides P.G."/>
            <person name="Scherer S.E."/>
            <person name="Li P.W."/>
            <person name="Hoskins R.A."/>
            <person name="Galle R.F."/>
            <person name="George R.A."/>
            <person name="Lewis S.E."/>
            <person name="Richards S."/>
            <person name="Ashburner M."/>
            <person name="Henderson S.N."/>
            <person name="Sutton G.G."/>
            <person name="Wortman J.R."/>
            <person name="Yandell M.D."/>
            <person name="Zhang Q."/>
            <person name="Chen L.X."/>
            <person name="Brandon R.C."/>
            <person name="Rogers Y.-H.C."/>
            <person name="Blazej R.G."/>
            <person name="Champe M."/>
            <person name="Pfeiffer B.D."/>
            <person name="Wan K.H."/>
            <person name="Doyle C."/>
            <person name="Baxter E.G."/>
            <person name="Helt G."/>
            <person name="Nelson C.R."/>
            <person name="Miklos G.L.G."/>
            <person name="Abril J.F."/>
            <person name="Agbayani A."/>
            <person name="An H.-J."/>
            <person name="Andrews-Pfannkoch C."/>
            <person name="Baldwin D."/>
            <person name="Ballew R.M."/>
            <person name="Basu A."/>
            <person name="Baxendale J."/>
            <person name="Bayraktaroglu L."/>
            <person name="Beasley E.M."/>
            <person name="Beeson K.Y."/>
            <person name="Benos P.V."/>
            <person name="Berman B.P."/>
            <person name="Bhandari D."/>
            <person name="Bolshakov S."/>
            <person name="Borkova D."/>
            <person name="Botchan M.R."/>
            <person name="Bouck J."/>
            <person name="Brokstein P."/>
            <person name="Brottier P."/>
            <person name="Burtis K.C."/>
            <person name="Busam D.A."/>
            <person name="Butler H."/>
            <person name="Cadieu E."/>
            <person name="Center A."/>
            <person name="Chandra I."/>
            <person name="Cherry J.M."/>
            <person name="Cawley S."/>
            <person name="Dahlke C."/>
            <person name="Davenport L.B."/>
            <person name="Davies P."/>
            <person name="de Pablos B."/>
            <person name="Delcher A."/>
            <person name="Deng Z."/>
            <person name="Mays A.D."/>
            <person name="Dew I."/>
            <person name="Dietz S.M."/>
            <person name="Dodson K."/>
            <person name="Doup L.E."/>
            <person name="Downes M."/>
            <person name="Dugan-Rocha S."/>
            <person name="Dunkov B.C."/>
            <person name="Dunn P."/>
            <person name="Durbin K.J."/>
            <person name="Evangelista C.C."/>
            <person name="Ferraz C."/>
            <person name="Ferriera S."/>
            <person name="Fleischmann W."/>
            <person name="Fosler C."/>
            <person name="Gabrielian A.E."/>
            <person name="Garg N.S."/>
            <person name="Gelbart W.M."/>
            <person name="Glasser K."/>
            <person name="Glodek A."/>
            <person name="Gong F."/>
            <person name="Gorrell J.H."/>
            <person name="Gu Z."/>
            <person name="Guan P."/>
            <person name="Harris M."/>
            <person name="Harris N.L."/>
            <person name="Harvey D.A."/>
            <person name="Heiman T.J."/>
            <person name="Hernandez J.R."/>
            <person name="Houck J."/>
            <person name="Hostin D."/>
            <person name="Houston K.A."/>
            <person name="Howland T.J."/>
            <person name="Wei M.-H."/>
            <person name="Ibegwam C."/>
            <person name="Jalali M."/>
            <person name="Kalush F."/>
            <person name="Karpen G.H."/>
            <person name="Ke Z."/>
            <person name="Kennison J.A."/>
            <person name="Ketchum K.A."/>
            <person name="Kimmel B.E."/>
            <person name="Kodira C.D."/>
            <person name="Kraft C.L."/>
            <person name="Kravitz S."/>
            <person name="Kulp D."/>
            <person name="Lai Z."/>
            <person name="Lasko P."/>
            <person name="Lei Y."/>
            <person name="Levitsky A.A."/>
            <person name="Li J.H."/>
            <person name="Li Z."/>
            <person name="Liang Y."/>
            <person name="Lin X."/>
            <person name="Liu X."/>
            <person name="Mattei B."/>
            <person name="McIntosh T.C."/>
            <person name="McLeod M.P."/>
            <person name="McPherson D."/>
            <person name="Merkulov G."/>
            <person name="Milshina N.V."/>
            <person name="Mobarry C."/>
            <person name="Morris J."/>
            <person name="Moshrefi A."/>
            <person name="Mount S.M."/>
            <person name="Moy M."/>
            <person name="Murphy B."/>
            <person name="Murphy L."/>
            <person name="Muzny D.M."/>
            <person name="Nelson D.L."/>
            <person name="Nelson D.R."/>
            <person name="Nelson K.A."/>
            <person name="Nixon K."/>
            <person name="Nusskern D.R."/>
            <person name="Pacleb J.M."/>
            <person name="Palazzolo M."/>
            <person name="Pittman G.S."/>
            <person name="Pan S."/>
            <person name="Pollard J."/>
            <person name="Puri V."/>
            <person name="Reese M.G."/>
            <person name="Reinert K."/>
            <person name="Remington K."/>
            <person name="Saunders R.D.C."/>
            <person name="Scheeler F."/>
            <person name="Shen H."/>
            <person name="Shue B.C."/>
            <person name="Siden-Kiamos I."/>
            <person name="Simpson M."/>
            <person name="Skupski M.P."/>
            <person name="Smith T.J."/>
            <person name="Spier E."/>
            <person name="Spradling A.C."/>
            <person name="Stapleton M."/>
            <person name="Strong R."/>
            <person name="Sun E."/>
            <person name="Svirskas R."/>
            <person name="Tector C."/>
            <person name="Turner R."/>
            <person name="Venter E."/>
            <person name="Wang A.H."/>
            <person name="Wang X."/>
            <person name="Wang Z.-Y."/>
            <person name="Wassarman D.A."/>
            <person name="Weinstock G.M."/>
            <person name="Weissenbach J."/>
            <person name="Williams S.M."/>
            <person name="Woodage T."/>
            <person name="Worley K.C."/>
            <person name="Wu D."/>
            <person name="Yang S."/>
            <person name="Yao Q.A."/>
            <person name="Ye J."/>
            <person name="Yeh R.-F."/>
            <person name="Zaveri J.S."/>
            <person name="Zhan M."/>
            <person name="Zhang G."/>
            <person name="Zhao Q."/>
            <person name="Zheng L."/>
            <person name="Zheng X.H."/>
            <person name="Zhong F.N."/>
            <person name="Zhong W."/>
            <person name="Zhou X."/>
            <person name="Zhu S.C."/>
            <person name="Zhu X."/>
            <person name="Smith H.O."/>
            <person name="Gibbs R.A."/>
            <person name="Myers E.W."/>
            <person name="Rubin G.M."/>
            <person name="Venter J.C."/>
        </authorList>
    </citation>
    <scope>NUCLEOTIDE SEQUENCE [LARGE SCALE GENOMIC DNA]</scope>
    <source>
        <strain evidence="10">Berkeley</strain>
    </source>
</reference>
<reference evidence="10" key="2">
    <citation type="journal article" date="2002" name="Genome Biol.">
        <title>Annotation of the Drosophila melanogaster euchromatic genome: a systematic review.</title>
        <authorList>
            <person name="Misra S."/>
            <person name="Crosby M.A."/>
            <person name="Mungall C.J."/>
            <person name="Matthews B.B."/>
            <person name="Campbell K.S."/>
            <person name="Hradecky P."/>
            <person name="Huang Y."/>
            <person name="Kaminker J.S."/>
            <person name="Millburn G.H."/>
            <person name="Prochnik S.E."/>
            <person name="Smith C.D."/>
            <person name="Tupy J.L."/>
            <person name="Whitfield E.J."/>
            <person name="Bayraktaroglu L."/>
            <person name="Berman B.P."/>
            <person name="Bettencourt B.R."/>
            <person name="Celniker S.E."/>
            <person name="de Grey A.D.N.J."/>
            <person name="Drysdale R.A."/>
            <person name="Harris N.L."/>
            <person name="Richter J."/>
            <person name="Russo S."/>
            <person name="Schroeder A.J."/>
            <person name="Shu S.Q."/>
            <person name="Stapleton M."/>
            <person name="Yamada C."/>
            <person name="Ashburner M."/>
            <person name="Gelbart W.M."/>
            <person name="Rubin G.M."/>
            <person name="Lewis S.E."/>
        </authorList>
    </citation>
    <scope>GENOME REANNOTATION</scope>
    <source>
        <strain evidence="10">Berkeley</strain>
    </source>
</reference>
<reference evidence="8" key="3">
    <citation type="journal article" date="2002" name="Genome Biol.">
        <title>A Drosophila full-length cDNA resource.</title>
        <authorList>
            <person name="Stapleton M."/>
            <person name="Carlson J.W."/>
            <person name="Brokstein P."/>
            <person name="Yu C."/>
            <person name="Champe M."/>
            <person name="George R.A."/>
            <person name="Guarin H."/>
            <person name="Kronmiller B."/>
            <person name="Pacleb J.M."/>
            <person name="Park S."/>
            <person name="Wan K.H."/>
            <person name="Rubin G.M."/>
            <person name="Celniker S.E."/>
        </authorList>
    </citation>
    <scope>NUCLEOTIDE SEQUENCE [LARGE SCALE MRNA]</scope>
    <source>
        <strain evidence="8">Berkeley</strain>
    </source>
</reference>
<reference evidence="7" key="4">
    <citation type="journal article" date="2005" name="Development">
        <title>PAT-related amino acid transporters regulate growth via a novel mechanism that does not require bulk transport of amino acids.</title>
        <authorList>
            <person name="Goberdhan D.C."/>
            <person name="Meredith D."/>
            <person name="Boyd C.A."/>
            <person name="Wilson C."/>
        </authorList>
    </citation>
    <scope>FUNCTION</scope>
</reference>
<reference evidence="7" key="5">
    <citation type="journal article" date="2012" name="PLoS ONE">
        <title>Proton-assisted amino acid transporter PAT1 complexes with Rag GTPases and activates TORC1 on late endosomal and lysosomal membranes.</title>
        <authorList>
            <person name="Oegmundsdottir M.H."/>
            <person name="Heublein S."/>
            <person name="Kazi S."/>
            <person name="Reynolds B."/>
            <person name="Visvalingam S.M."/>
            <person name="Shaw M.K."/>
            <person name="Goberdhan D.C."/>
        </authorList>
    </citation>
    <scope>FUNCTION</scope>
    <scope>SUBCELLULAR LOCATION</scope>
</reference>
<reference key="6">
    <citation type="journal article" date="2023" name="IScience">
        <title>Fast drosophila enterocyte regrowth after infection involves a reverse metabolic flux driven by an amino acid transporter.</title>
        <authorList>
            <person name="Socha C."/>
            <person name="Pais I.S."/>
            <person name="Lee K.Z."/>
            <person name="Liu J."/>
            <person name="Liegeois S."/>
            <person name="Lestradet M."/>
            <person name="Ferrandon D."/>
        </authorList>
    </citation>
    <scope>FUNCTION</scope>
    <scope>SUBCELLULAR LOCATION</scope>
    <scope>TISSUE SPECIFICITY</scope>
    <scope>INDUCTION BY BACTERIAL INFECTION</scope>
    <scope>DISRUPTION PHENOTYPE</scope>
</reference>
<sequence>MNDDIKTVTVYPTTLELTTPTKSANGSNDDYDPHQHRELKNPTTNFQTFAHFLKASVGTGVLAMPSAFAHAGYVNGTLLTLIIGSLALYCLHILIKCMYILCKRQRVPYVSFSQAMNLGLKQGPPWLRCLAPIAVPFVDGFLAFYHFGICCVYVVFIAESIKQLVDEYLVVWDVRIHMCIIIVPLLLIYSIKNLKLLAPFSSAANLLLLVGFGIILYYIFEELPPLSERDPFVAAGKLPTFFGTVLFALEAVGVILAIEENMATPKSFVGPCGILNSGMSIVLGLYVLLGFFGYWKYGNESEGSITLNIPQSEIPAQVVKVFFAITTWISYALQGYVTAHILWDKYLAKRFKETRQTFYELIFRAIIVLLTFGCAVAIPDLSVFLSLVGSFCLSILGLIFPVLLQICVQYTEGYGPFRIKLIINLLLLCFGIFGGVVGTYVSILDIIAVYK</sequence>
<dbReference type="EMBL" id="AE014296">
    <property type="protein sequence ID" value="AAF47603.1"/>
    <property type="molecule type" value="Genomic_DNA"/>
</dbReference>
<dbReference type="EMBL" id="AY119054">
    <property type="protein sequence ID" value="AAM50914.1"/>
    <property type="molecule type" value="mRNA"/>
</dbReference>
<dbReference type="RefSeq" id="NP_647686.1">
    <property type="nucleotide sequence ID" value="NM_139429.2"/>
</dbReference>
<dbReference type="SMR" id="Q9W056"/>
<dbReference type="FunCoup" id="Q9W056">
    <property type="interactions" value="45"/>
</dbReference>
<dbReference type="IntAct" id="Q9W056">
    <property type="interactions" value="2"/>
</dbReference>
<dbReference type="STRING" id="7227.FBpp0072724"/>
<dbReference type="GlyGen" id="Q9W056">
    <property type="glycosylation" value="2 sites"/>
</dbReference>
<dbReference type="PaxDb" id="7227-FBpp0072724"/>
<dbReference type="DNASU" id="38264"/>
<dbReference type="EnsemblMetazoa" id="FBtr0072845">
    <property type="protein sequence ID" value="FBpp0072724"/>
    <property type="gene ID" value="FBgn0035300"/>
</dbReference>
<dbReference type="GeneID" id="38264"/>
<dbReference type="KEGG" id="dme:Dmel_CG1139"/>
<dbReference type="UCSC" id="CG1139-RA">
    <property type="organism name" value="d. melanogaster"/>
</dbReference>
<dbReference type="AGR" id="FB:FBgn0035300"/>
<dbReference type="CTD" id="38264"/>
<dbReference type="FlyBase" id="FBgn0035300">
    <property type="gene designation" value="acs"/>
</dbReference>
<dbReference type="VEuPathDB" id="VectorBase:FBgn0035300"/>
<dbReference type="eggNOG" id="KOG1304">
    <property type="taxonomic scope" value="Eukaryota"/>
</dbReference>
<dbReference type="GeneTree" id="ENSGT00940000167965"/>
<dbReference type="HOGENOM" id="CLU_009646_0_1_1"/>
<dbReference type="InParanoid" id="Q9W056"/>
<dbReference type="OMA" id="ICVQYTE"/>
<dbReference type="OrthoDB" id="1684102at2759"/>
<dbReference type="PhylomeDB" id="Q9W056"/>
<dbReference type="Reactome" id="R-DME-352230">
    <property type="pathway name" value="Amino acid transport across the plasma membrane"/>
</dbReference>
<dbReference type="Reactome" id="R-DME-428559">
    <property type="pathway name" value="Proton-coupled neutral amino acid transporters"/>
</dbReference>
<dbReference type="Reactome" id="R-DME-71240">
    <property type="pathway name" value="Tryptophan catabolism"/>
</dbReference>
<dbReference type="BioGRID-ORCS" id="38264">
    <property type="hits" value="0 hits in 3 CRISPR screens"/>
</dbReference>
<dbReference type="GenomeRNAi" id="38264"/>
<dbReference type="PRO" id="PR:Q9W056"/>
<dbReference type="Proteomes" id="UP000000803">
    <property type="component" value="Chromosome 3L"/>
</dbReference>
<dbReference type="Bgee" id="FBgn0035300">
    <property type="expression patterns" value="Expressed in adult Malpighian tubule (Drosophila) and 21 other cell types or tissues"/>
</dbReference>
<dbReference type="GO" id="GO:0033774">
    <property type="term" value="C:basal labyrinth"/>
    <property type="evidence" value="ECO:0000314"/>
    <property type="project" value="FlyBase"/>
</dbReference>
<dbReference type="GO" id="GO:0009925">
    <property type="term" value="C:basal plasma membrane"/>
    <property type="evidence" value="ECO:0007669"/>
    <property type="project" value="UniProtKB-SubCell"/>
</dbReference>
<dbReference type="GO" id="GO:0031902">
    <property type="term" value="C:late endosome membrane"/>
    <property type="evidence" value="ECO:0007669"/>
    <property type="project" value="UniProtKB-SubCell"/>
</dbReference>
<dbReference type="GO" id="GO:0005765">
    <property type="term" value="C:lysosomal membrane"/>
    <property type="evidence" value="ECO:0007669"/>
    <property type="project" value="UniProtKB-SubCell"/>
</dbReference>
<dbReference type="GO" id="GO:0031090">
    <property type="term" value="C:organelle membrane"/>
    <property type="evidence" value="ECO:0000314"/>
    <property type="project" value="FlyBase"/>
</dbReference>
<dbReference type="GO" id="GO:0005886">
    <property type="term" value="C:plasma membrane"/>
    <property type="evidence" value="ECO:0000314"/>
    <property type="project" value="FlyBase"/>
</dbReference>
<dbReference type="GO" id="GO:0005774">
    <property type="term" value="C:vacuolar membrane"/>
    <property type="evidence" value="ECO:0000318"/>
    <property type="project" value="GO_Central"/>
</dbReference>
<dbReference type="GO" id="GO:0015171">
    <property type="term" value="F:amino acid transmembrane transporter activity"/>
    <property type="evidence" value="ECO:0000314"/>
    <property type="project" value="UniProtKB"/>
</dbReference>
<dbReference type="GO" id="GO:0015179">
    <property type="term" value="F:L-amino acid transmembrane transporter activity"/>
    <property type="evidence" value="ECO:0000318"/>
    <property type="project" value="GO_Central"/>
</dbReference>
<dbReference type="GO" id="GO:0003333">
    <property type="term" value="P:amino acid transmembrane transport"/>
    <property type="evidence" value="ECO:0000314"/>
    <property type="project" value="UniProtKB"/>
</dbReference>
<dbReference type="GO" id="GO:0040008">
    <property type="term" value="P:regulation of growth"/>
    <property type="evidence" value="ECO:0000315"/>
    <property type="project" value="FlyBase"/>
</dbReference>
<dbReference type="InterPro" id="IPR013057">
    <property type="entry name" value="AA_transpt_TM"/>
</dbReference>
<dbReference type="PANTHER" id="PTHR22950">
    <property type="entry name" value="AMINO ACID TRANSPORTER"/>
    <property type="match status" value="1"/>
</dbReference>
<dbReference type="PANTHER" id="PTHR22950:SF340">
    <property type="entry name" value="AMINO ACID TRANSPORTER TRANSMEMBRANE DOMAIN-CONTAINING PROTEIN-RELATED"/>
    <property type="match status" value="1"/>
</dbReference>
<dbReference type="Pfam" id="PF01490">
    <property type="entry name" value="Aa_trans"/>
    <property type="match status" value="1"/>
</dbReference>
<proteinExistence type="evidence at transcript level"/>
<gene>
    <name evidence="6 9" type="primary">acs</name>
    <name evidence="9" type="ORF">CG1139</name>
</gene>
<name>S36A_DROME</name>
<comment type="function">
    <text evidence="3 4 5">Amino acid transporter which has pH-dependent electrogenic transport activity for alanine, glycine and proline (PubMed:15843412). Plays a role in positive regulation of growth by directly or indirectly modulating the effects of the TOR signaling pathway (PubMed:15843412, PubMed:22574197). Required in enterocytes for the efficient recovery of gut epithelium following the cytoplasmic purge response to bacterial infection (PubMed:37636057). Acts cell-autonomously to promote the retrograde transport of amino acids into the intestinal epithelium (PubMed:37636057). Acts non-cell-autonomously through the insulin signaling pathway to stimulate Myc expression and the release of amino acids from nutrient stores into the hemolymph (PubMed:37636057).</text>
</comment>
<comment type="subcellular location">
    <subcellularLocation>
        <location evidence="4">Cell membrane</location>
        <topology evidence="1">Multi-pass membrane protein</topology>
    </subcellularLocation>
    <subcellularLocation>
        <location evidence="4">Late endosome membrane</location>
        <topology evidence="1">Multi-pass membrane protein</topology>
    </subcellularLocation>
    <subcellularLocation>
        <location evidence="4">Lysosome membrane</location>
        <topology evidence="1">Multi-pass membrane protein</topology>
    </subcellularLocation>
    <subcellularLocation>
        <location evidence="5">Basal cell membrane</location>
        <topology evidence="1">Multi-pass membrane protein</topology>
    </subcellularLocation>
    <text evidence="4 5">Partially colocalizes with the late endosomal and lysosomal marker Lamp1 (PubMed:22574197). Localizes to the basal labyrinth in enterocytes of the midgut (PubMed:37636057).</text>
</comment>
<comment type="tissue specificity">
    <text evidence="5">Expressed in the proximal and distal regions of the midgut; expressed in enterocytes and progenitor cells (PubMed:37636057). Expression increases in response to intestinal bacterial infection and spreads further into the midgut, eventually covering the entire midgut (PubMed:37636057).</text>
</comment>
<comment type="induction">
    <text evidence="5">In the midgut by intestinal bacterial infection; probably in response to the cytoplasmic purge response to infection by enterocytes.</text>
</comment>
<comment type="disruption phenotype">
    <text evidence="5">Viable (PubMed:37636057). Adult flies show delayed recovery of the midgut epithelial wall following the cytoplasmic purge response to intestinal bacterial infection (PubMed:37636057). RNAi-mediated ubiquitous knockdown or tissue specific knockdown in enterocytes or epithelial progenitor cells impairs recovery of intestinal wall thickness after the cytoplasmic purge response to intestinal bacterial infection (PubMed:37636057). RNAi-mediated tissue specific knockdown in Malpighian tubules, visceral muscles, enteroendocrine cells or the fat body has no effect on recovery from intestinal bacterial infection (PubMed:37636057).</text>
</comment>
<comment type="miscellaneous">
    <text evidence="6">'Arcus' Is the Roman goddess, homologous to the Greek Iris, who personifies the rainbow and replenishes rain clouds.</text>
</comment>
<comment type="similarity">
    <text evidence="7">Belongs to the amino acid/polyamine transporter 2 family.</text>
</comment>